<comment type="function">
    <text evidence="1">Releases the supercoiling and torsional tension of DNA introduced during the DNA replication and transcription by transiently cleaving and rejoining one strand of the DNA duplex. Introduces a single-strand break via transesterification at a target site in duplex DNA. The scissile phosphodiester is attacked by the catalytic tyrosine of the enzyme, resulting in the formation of a DNA-(5'-phosphotyrosyl)-enzyme intermediate and the expulsion of a 3'-OH DNA strand. The free DNA strand than undergoes passage around the unbroken strand thus removing DNA supercoils. Finally, in the religation step, the DNA 3'-OH attacks the covalent intermediate to expel the active-site tyrosine and restore the DNA phosphodiester backbone (By similarity). Weakly relaxes negative supercoils and displays a distinct preference for binding single-stranded DNA.</text>
</comment>
<comment type="catalytic activity">
    <reaction evidence="5">
        <text>ATP-independent breakage of single-stranded DNA, followed by passage and rejoining.</text>
        <dbReference type="EC" id="5.6.2.1"/>
    </reaction>
</comment>
<comment type="similarity">
    <text evidence="4 7">Belongs to the type IA topoisomerase family.</text>
</comment>
<protein>
    <recommendedName>
        <fullName>DNA topoisomerase 3-alpha</fullName>
        <ecNumber evidence="5">5.6.2.1</ecNumber>
    </recommendedName>
    <alternativeName>
        <fullName>DNA topoisomerase III alpha</fullName>
    </alternativeName>
</protein>
<sequence length="1250" mass="136137">MKAVLTCFRPVVASHRRYCANPGQAMKYLNVAEKNDAAKTIAGLLSNGAAQRREGYSVYNKVFDFEAPVRGQNAKMVMTSVSGHMMQLAFQVSYKNWRTVDPRSLFDAPVKKGVGSDYEPIKRTLEREVRGCQGLIIWTDCDREGENIGYEIIDVCRAIKPNISVYRATFSEITTVAVRRALQQLGQPDKRQSDAVDVRTELDLRTGAAITRFQTMRLQRLFPEKIADKLISYGSCQIPTLGFVAERYKEIEAFVSEPFWKIKVLHTIDDLTVEFNWARNRLFDKEACENYLLLCLAEPDPRALVESVTVKPKHKWRPTPLDTVEMEKLGSRKLKLSAKETMTIAEKLYTKGFISYPRTETNQFSKEFALAPLVEMQTGHRDWGAFAQRVIEWGPNPRNGNKSDQAHPPIHPTKLAENLQGNEARVYELVVRHFLACVSKDAVGSETLVHIDIAGEKFTANGLVIHERNYLDVYVYDKWSAKQIHHYENGQRFEPTEVSLHEGATTAPPLLTEADLIALMEKHGIGTDATHAEHINTIKERGYIGVLDKGFLVPGVIGMGLYEGYDAMELALAKPQLRAEFELDLKLICQGQKDPKVVLTEQIAKYKQAYQQITDKITAMDAKISARINETPAANSAVQEGADGSAPSHGIIQSIFQCPKCNEAPLALKPKKNQQGWYIGCNNFPDCKNAVWLPTECKDASVLDECCPTCGDGYRMLKFRLSTPYYRGVFGTPSGWYKTCLPCDNLFRTTFNINLDSVKKVGGIVGEVRGGGGGPGPGPGGGGSGRGAGSGGWSSGPGGGGSGGGGGSGGWGSGTGGGGSGGWGSGTGGGGLGGGKGKKPGGESKKSATKKPPNEPKPKKTKEPKAAPNKKTSSKSSGSIRSFFTSAAPTNSASNGLDEFFDSNDGFEDAMLAAAESVESSSQPKTISMVPLDDDIAAAFAADDDAEFEALVNGGTMPTESNGDQQLDKSLSEWIKEQDKADERPMLWGTRERASLGTAAPTPPPKPAAKRPRWDSVERDSTPPSSVPESETVLCTGCQQPARQNTVRKNGPNLGRLYYKCPKPDECNFFQWADEPPSSAKSKNSTGSAPQSTTSWGSNRVVTLPSIQQSNSQRGQSSMRSNSSSTVTITQTKTKQQERNTATPGDGEEVMCNCGQLASQLTVRKDGPNQGRPFYACPTREKSCGFFKWGDEDQNQGASSTSWGSANRNPPGRSQPTAITSDGPKTRRCGLCRKEGHTRNKCPRKDEFDM</sequence>
<reference key="1">
    <citation type="submission" date="2000-04" db="EMBL/GenBank/DDBJ databases">
        <title>Drosophila melanogaster topoisomerase III alpha.</title>
        <authorList>
            <person name="Plank J.L."/>
            <person name="Reineke J.C."/>
            <person name="Wilson T.M."/>
            <person name="Hsieh T.-S."/>
        </authorList>
    </citation>
    <scope>NUCLEOTIDE SEQUENCE [MRNA]</scope>
    <source>
        <tissue>Embryo</tissue>
    </source>
</reference>
<reference key="2">
    <citation type="journal article" date="2000" name="Science">
        <title>The genome sequence of Drosophila melanogaster.</title>
        <authorList>
            <person name="Adams M.D."/>
            <person name="Celniker S.E."/>
            <person name="Holt R.A."/>
            <person name="Evans C.A."/>
            <person name="Gocayne J.D."/>
            <person name="Amanatides P.G."/>
            <person name="Scherer S.E."/>
            <person name="Li P.W."/>
            <person name="Hoskins R.A."/>
            <person name="Galle R.F."/>
            <person name="George R.A."/>
            <person name="Lewis S.E."/>
            <person name="Richards S."/>
            <person name="Ashburner M."/>
            <person name="Henderson S.N."/>
            <person name="Sutton G.G."/>
            <person name="Wortman J.R."/>
            <person name="Yandell M.D."/>
            <person name="Zhang Q."/>
            <person name="Chen L.X."/>
            <person name="Brandon R.C."/>
            <person name="Rogers Y.-H.C."/>
            <person name="Blazej R.G."/>
            <person name="Champe M."/>
            <person name="Pfeiffer B.D."/>
            <person name="Wan K.H."/>
            <person name="Doyle C."/>
            <person name="Baxter E.G."/>
            <person name="Helt G."/>
            <person name="Nelson C.R."/>
            <person name="Miklos G.L.G."/>
            <person name="Abril J.F."/>
            <person name="Agbayani A."/>
            <person name="An H.-J."/>
            <person name="Andrews-Pfannkoch C."/>
            <person name="Baldwin D."/>
            <person name="Ballew R.M."/>
            <person name="Basu A."/>
            <person name="Baxendale J."/>
            <person name="Bayraktaroglu L."/>
            <person name="Beasley E.M."/>
            <person name="Beeson K.Y."/>
            <person name="Benos P.V."/>
            <person name="Berman B.P."/>
            <person name="Bhandari D."/>
            <person name="Bolshakov S."/>
            <person name="Borkova D."/>
            <person name="Botchan M.R."/>
            <person name="Bouck J."/>
            <person name="Brokstein P."/>
            <person name="Brottier P."/>
            <person name="Burtis K.C."/>
            <person name="Busam D.A."/>
            <person name="Butler H."/>
            <person name="Cadieu E."/>
            <person name="Center A."/>
            <person name="Chandra I."/>
            <person name="Cherry J.M."/>
            <person name="Cawley S."/>
            <person name="Dahlke C."/>
            <person name="Davenport L.B."/>
            <person name="Davies P."/>
            <person name="de Pablos B."/>
            <person name="Delcher A."/>
            <person name="Deng Z."/>
            <person name="Mays A.D."/>
            <person name="Dew I."/>
            <person name="Dietz S.M."/>
            <person name="Dodson K."/>
            <person name="Doup L.E."/>
            <person name="Downes M."/>
            <person name="Dugan-Rocha S."/>
            <person name="Dunkov B.C."/>
            <person name="Dunn P."/>
            <person name="Durbin K.J."/>
            <person name="Evangelista C.C."/>
            <person name="Ferraz C."/>
            <person name="Ferriera S."/>
            <person name="Fleischmann W."/>
            <person name="Fosler C."/>
            <person name="Gabrielian A.E."/>
            <person name="Garg N.S."/>
            <person name="Gelbart W.M."/>
            <person name="Glasser K."/>
            <person name="Glodek A."/>
            <person name="Gong F."/>
            <person name="Gorrell J.H."/>
            <person name="Gu Z."/>
            <person name="Guan P."/>
            <person name="Harris M."/>
            <person name="Harris N.L."/>
            <person name="Harvey D.A."/>
            <person name="Heiman T.J."/>
            <person name="Hernandez J.R."/>
            <person name="Houck J."/>
            <person name="Hostin D."/>
            <person name="Houston K.A."/>
            <person name="Howland T.J."/>
            <person name="Wei M.-H."/>
            <person name="Ibegwam C."/>
            <person name="Jalali M."/>
            <person name="Kalush F."/>
            <person name="Karpen G.H."/>
            <person name="Ke Z."/>
            <person name="Kennison J.A."/>
            <person name="Ketchum K.A."/>
            <person name="Kimmel B.E."/>
            <person name="Kodira C.D."/>
            <person name="Kraft C.L."/>
            <person name="Kravitz S."/>
            <person name="Kulp D."/>
            <person name="Lai Z."/>
            <person name="Lasko P."/>
            <person name="Lei Y."/>
            <person name="Levitsky A.A."/>
            <person name="Li J.H."/>
            <person name="Li Z."/>
            <person name="Liang Y."/>
            <person name="Lin X."/>
            <person name="Liu X."/>
            <person name="Mattei B."/>
            <person name="McIntosh T.C."/>
            <person name="McLeod M.P."/>
            <person name="McPherson D."/>
            <person name="Merkulov G."/>
            <person name="Milshina N.V."/>
            <person name="Mobarry C."/>
            <person name="Morris J."/>
            <person name="Moshrefi A."/>
            <person name="Mount S.M."/>
            <person name="Moy M."/>
            <person name="Murphy B."/>
            <person name="Murphy L."/>
            <person name="Muzny D.M."/>
            <person name="Nelson D.L."/>
            <person name="Nelson D.R."/>
            <person name="Nelson K.A."/>
            <person name="Nixon K."/>
            <person name="Nusskern D.R."/>
            <person name="Pacleb J.M."/>
            <person name="Palazzolo M."/>
            <person name="Pittman G.S."/>
            <person name="Pan S."/>
            <person name="Pollard J."/>
            <person name="Puri V."/>
            <person name="Reese M.G."/>
            <person name="Reinert K."/>
            <person name="Remington K."/>
            <person name="Saunders R.D.C."/>
            <person name="Scheeler F."/>
            <person name="Shen H."/>
            <person name="Shue B.C."/>
            <person name="Siden-Kiamos I."/>
            <person name="Simpson M."/>
            <person name="Skupski M.P."/>
            <person name="Smith T.J."/>
            <person name="Spier E."/>
            <person name="Spradling A.C."/>
            <person name="Stapleton M."/>
            <person name="Strong R."/>
            <person name="Sun E."/>
            <person name="Svirskas R."/>
            <person name="Tector C."/>
            <person name="Turner R."/>
            <person name="Venter E."/>
            <person name="Wang A.H."/>
            <person name="Wang X."/>
            <person name="Wang Z.-Y."/>
            <person name="Wassarman D.A."/>
            <person name="Weinstock G.M."/>
            <person name="Weissenbach J."/>
            <person name="Williams S.M."/>
            <person name="Woodage T."/>
            <person name="Worley K.C."/>
            <person name="Wu D."/>
            <person name="Yang S."/>
            <person name="Yao Q.A."/>
            <person name="Ye J."/>
            <person name="Yeh R.-F."/>
            <person name="Zaveri J.S."/>
            <person name="Zhan M."/>
            <person name="Zhang G."/>
            <person name="Zhao Q."/>
            <person name="Zheng L."/>
            <person name="Zheng X.H."/>
            <person name="Zhong F.N."/>
            <person name="Zhong W."/>
            <person name="Zhou X."/>
            <person name="Zhu S.C."/>
            <person name="Zhu X."/>
            <person name="Smith H.O."/>
            <person name="Gibbs R.A."/>
            <person name="Myers E.W."/>
            <person name="Rubin G.M."/>
            <person name="Venter J.C."/>
        </authorList>
    </citation>
    <scope>NUCLEOTIDE SEQUENCE [LARGE SCALE GENOMIC DNA]</scope>
    <source>
        <strain>Berkeley</strain>
    </source>
</reference>
<reference key="3">
    <citation type="journal article" date="2002" name="Genome Biol.">
        <title>Annotation of the Drosophila melanogaster euchromatic genome: a systematic review.</title>
        <authorList>
            <person name="Misra S."/>
            <person name="Crosby M.A."/>
            <person name="Mungall C.J."/>
            <person name="Matthews B.B."/>
            <person name="Campbell K.S."/>
            <person name="Hradecky P."/>
            <person name="Huang Y."/>
            <person name="Kaminker J.S."/>
            <person name="Millburn G.H."/>
            <person name="Prochnik S.E."/>
            <person name="Smith C.D."/>
            <person name="Tupy J.L."/>
            <person name="Whitfield E.J."/>
            <person name="Bayraktaroglu L."/>
            <person name="Berman B.P."/>
            <person name="Bettencourt B.R."/>
            <person name="Celniker S.E."/>
            <person name="de Grey A.D.N.J."/>
            <person name="Drysdale R.A."/>
            <person name="Harris N.L."/>
            <person name="Richter J."/>
            <person name="Russo S."/>
            <person name="Schroeder A.J."/>
            <person name="Shu S.Q."/>
            <person name="Stapleton M."/>
            <person name="Yamada C."/>
            <person name="Ashburner M."/>
            <person name="Gelbart W.M."/>
            <person name="Rubin G.M."/>
            <person name="Lewis S.E."/>
        </authorList>
    </citation>
    <scope>GENOME REANNOTATION</scope>
    <source>
        <strain>Berkeley</strain>
    </source>
</reference>
<reference key="4">
    <citation type="submission" date="2004-08" db="EMBL/GenBank/DDBJ databases">
        <authorList>
            <person name="Stapleton M."/>
            <person name="Carlson J.W."/>
            <person name="Chavez C."/>
            <person name="Frise E."/>
            <person name="George R.A."/>
            <person name="Pacleb J.M."/>
            <person name="Park S."/>
            <person name="Wan K.H."/>
            <person name="Yu C."/>
            <person name="Rubin G.M."/>
            <person name="Celniker S.E."/>
        </authorList>
    </citation>
    <scope>NUCLEOTIDE SEQUENCE [LARGE SCALE MRNA]</scope>
    <source>
        <strain>Berkeley</strain>
        <tissue>Embryo</tissue>
    </source>
</reference>
<dbReference type="EC" id="5.6.2.1" evidence="5"/>
<dbReference type="EMBL" id="AF255733">
    <property type="protein sequence ID" value="AAF71288.1"/>
    <property type="molecule type" value="mRNA"/>
</dbReference>
<dbReference type="EMBL" id="AE014134">
    <property type="protein sequence ID" value="AAF53813.2"/>
    <property type="molecule type" value="Genomic_DNA"/>
</dbReference>
<dbReference type="EMBL" id="BT015282">
    <property type="protein sequence ID" value="AAT94511.1"/>
    <property type="molecule type" value="mRNA"/>
</dbReference>
<dbReference type="RefSeq" id="NP_523602.2">
    <property type="nucleotide sequence ID" value="NM_078878.3"/>
</dbReference>
<dbReference type="SMR" id="Q9NG98"/>
<dbReference type="FunCoup" id="Q9NG98">
    <property type="interactions" value="2755"/>
</dbReference>
<dbReference type="IntAct" id="Q9NG98">
    <property type="interactions" value="4"/>
</dbReference>
<dbReference type="MINT" id="Q9NG98"/>
<dbReference type="STRING" id="7227.FBpp0080787"/>
<dbReference type="GlyGen" id="Q9NG98">
    <property type="glycosylation" value="2 sites"/>
</dbReference>
<dbReference type="PaxDb" id="7227-FBpp0080787"/>
<dbReference type="DNASU" id="35236"/>
<dbReference type="EnsemblMetazoa" id="FBtr0081246">
    <property type="protein sequence ID" value="FBpp0080787"/>
    <property type="gene ID" value="FBgn0040268"/>
</dbReference>
<dbReference type="GeneID" id="35236"/>
<dbReference type="KEGG" id="dme:Dmel_CG10123"/>
<dbReference type="AGR" id="FB:FBgn0040268"/>
<dbReference type="CTD" id="35236"/>
<dbReference type="FlyBase" id="FBgn0040268">
    <property type="gene designation" value="Top3alpha"/>
</dbReference>
<dbReference type="VEuPathDB" id="VectorBase:FBgn0040268"/>
<dbReference type="eggNOG" id="KOG1956">
    <property type="taxonomic scope" value="Eukaryota"/>
</dbReference>
<dbReference type="GeneTree" id="ENSGT00940000156701"/>
<dbReference type="HOGENOM" id="CLU_002929_1_2_1"/>
<dbReference type="InParanoid" id="Q9NG98"/>
<dbReference type="OMA" id="WYKTCLP"/>
<dbReference type="OrthoDB" id="430051at2759"/>
<dbReference type="PhylomeDB" id="Q9NG98"/>
<dbReference type="BioGRID-ORCS" id="35236">
    <property type="hits" value="0 hits in 1 CRISPR screen"/>
</dbReference>
<dbReference type="GenomeRNAi" id="35236"/>
<dbReference type="PRO" id="PR:Q9NG98"/>
<dbReference type="Proteomes" id="UP000000803">
    <property type="component" value="Chromosome 2L"/>
</dbReference>
<dbReference type="Bgee" id="FBgn0040268">
    <property type="expression patterns" value="Expressed in adult enteroendocrine precursor cell in adult midgut (Drosophila) and 33 other cell types or tissues"/>
</dbReference>
<dbReference type="GO" id="GO:0042645">
    <property type="term" value="C:mitochondrial nucleoid"/>
    <property type="evidence" value="ECO:0000314"/>
    <property type="project" value="FlyBase"/>
</dbReference>
<dbReference type="GO" id="GO:0005634">
    <property type="term" value="C:nucleus"/>
    <property type="evidence" value="ECO:0000314"/>
    <property type="project" value="FlyBase"/>
</dbReference>
<dbReference type="GO" id="GO:0031422">
    <property type="term" value="C:RecQ family helicase-topoisomerase III complex"/>
    <property type="evidence" value="ECO:0000318"/>
    <property type="project" value="GO_Central"/>
</dbReference>
<dbReference type="GO" id="GO:0003677">
    <property type="term" value="F:DNA binding"/>
    <property type="evidence" value="ECO:0007669"/>
    <property type="project" value="UniProtKB-KW"/>
</dbReference>
<dbReference type="GO" id="GO:0003916">
    <property type="term" value="F:DNA topoisomerase activity"/>
    <property type="evidence" value="ECO:0000314"/>
    <property type="project" value="FlyBase"/>
</dbReference>
<dbReference type="GO" id="GO:0003917">
    <property type="term" value="F:DNA topoisomerase type I (single strand cut, ATP-independent) activity"/>
    <property type="evidence" value="ECO:0000318"/>
    <property type="project" value="GO_Central"/>
</dbReference>
<dbReference type="GO" id="GO:0008270">
    <property type="term" value="F:zinc ion binding"/>
    <property type="evidence" value="ECO:0007669"/>
    <property type="project" value="UniProtKB-KW"/>
</dbReference>
<dbReference type="GO" id="GO:0048589">
    <property type="term" value="P:developmental growth"/>
    <property type="evidence" value="ECO:0000315"/>
    <property type="project" value="FlyBase"/>
</dbReference>
<dbReference type="GO" id="GO:0006310">
    <property type="term" value="P:DNA recombination"/>
    <property type="evidence" value="ECO:0000318"/>
    <property type="project" value="GO_Central"/>
</dbReference>
<dbReference type="GO" id="GO:0006281">
    <property type="term" value="P:DNA repair"/>
    <property type="evidence" value="ECO:0000318"/>
    <property type="project" value="GO_Central"/>
</dbReference>
<dbReference type="GO" id="GO:0006265">
    <property type="term" value="P:DNA topological change"/>
    <property type="evidence" value="ECO:0000318"/>
    <property type="project" value="GO_Central"/>
</dbReference>
<dbReference type="GO" id="GO:0000724">
    <property type="term" value="P:double-strand break repair via homologous recombination"/>
    <property type="evidence" value="ECO:0000315"/>
    <property type="project" value="FlyBase"/>
</dbReference>
<dbReference type="GO" id="GO:0000002">
    <property type="term" value="P:mitochondrial genome maintenance"/>
    <property type="evidence" value="ECO:0000315"/>
    <property type="project" value="FlyBase"/>
</dbReference>
<dbReference type="GO" id="GO:0042246">
    <property type="term" value="P:tissue regeneration"/>
    <property type="evidence" value="ECO:0000315"/>
    <property type="project" value="FlyBase"/>
</dbReference>
<dbReference type="CDD" id="cd00186">
    <property type="entry name" value="TOP1Ac"/>
    <property type="match status" value="1"/>
</dbReference>
<dbReference type="CDD" id="cd03362">
    <property type="entry name" value="TOPRIM_TopoIA_TopoIII"/>
    <property type="match status" value="1"/>
</dbReference>
<dbReference type="FunFam" id="1.10.290.10:FF:000001">
    <property type="entry name" value="DNA topoisomerase"/>
    <property type="match status" value="1"/>
</dbReference>
<dbReference type="FunFam" id="1.10.460.10:FF:000003">
    <property type="entry name" value="DNA topoisomerase"/>
    <property type="match status" value="1"/>
</dbReference>
<dbReference type="FunFam" id="3.40.50.140:FF:000003">
    <property type="entry name" value="DNA topoisomerase"/>
    <property type="match status" value="1"/>
</dbReference>
<dbReference type="Gene3D" id="3.40.50.140">
    <property type="match status" value="1"/>
</dbReference>
<dbReference type="Gene3D" id="3.30.65.10">
    <property type="entry name" value="Bacterial Topoisomerase I, domain 1"/>
    <property type="match status" value="1"/>
</dbReference>
<dbReference type="Gene3D" id="1.10.460.10">
    <property type="entry name" value="Topoisomerase I, domain 2"/>
    <property type="match status" value="1"/>
</dbReference>
<dbReference type="Gene3D" id="2.70.20.10">
    <property type="entry name" value="Topoisomerase I, domain 3"/>
    <property type="match status" value="1"/>
</dbReference>
<dbReference type="Gene3D" id="1.10.290.10">
    <property type="entry name" value="Topoisomerase I, domain 4"/>
    <property type="match status" value="1"/>
</dbReference>
<dbReference type="InterPro" id="IPR000380">
    <property type="entry name" value="Topo_IA"/>
</dbReference>
<dbReference type="InterPro" id="IPR003601">
    <property type="entry name" value="Topo_IA_2"/>
</dbReference>
<dbReference type="InterPro" id="IPR023406">
    <property type="entry name" value="Topo_IA_AS"/>
</dbReference>
<dbReference type="InterPro" id="IPR013497">
    <property type="entry name" value="Topo_IA_cen"/>
</dbReference>
<dbReference type="InterPro" id="IPR013824">
    <property type="entry name" value="Topo_IA_cen_sub1"/>
</dbReference>
<dbReference type="InterPro" id="IPR013825">
    <property type="entry name" value="Topo_IA_cen_sub2"/>
</dbReference>
<dbReference type="InterPro" id="IPR013826">
    <property type="entry name" value="Topo_IA_cen_sub3"/>
</dbReference>
<dbReference type="InterPro" id="IPR023405">
    <property type="entry name" value="Topo_IA_core_domain"/>
</dbReference>
<dbReference type="InterPro" id="IPR003602">
    <property type="entry name" value="Topo_IA_DNA-bd_dom"/>
</dbReference>
<dbReference type="InterPro" id="IPR013498">
    <property type="entry name" value="Topo_IA_Znf"/>
</dbReference>
<dbReference type="InterPro" id="IPR006171">
    <property type="entry name" value="TOPRIM_dom"/>
</dbReference>
<dbReference type="InterPro" id="IPR034144">
    <property type="entry name" value="TOPRIM_TopoIII"/>
</dbReference>
<dbReference type="InterPro" id="IPR010666">
    <property type="entry name" value="Znf_GRF"/>
</dbReference>
<dbReference type="PANTHER" id="PTHR11390:SF21">
    <property type="entry name" value="DNA TOPOISOMERASE 3-ALPHA"/>
    <property type="match status" value="1"/>
</dbReference>
<dbReference type="PANTHER" id="PTHR11390">
    <property type="entry name" value="PROKARYOTIC DNA TOPOISOMERASE"/>
    <property type="match status" value="1"/>
</dbReference>
<dbReference type="Pfam" id="PF01131">
    <property type="entry name" value="Topoisom_bac"/>
    <property type="match status" value="1"/>
</dbReference>
<dbReference type="Pfam" id="PF01751">
    <property type="entry name" value="Toprim"/>
    <property type="match status" value="1"/>
</dbReference>
<dbReference type="Pfam" id="PF06839">
    <property type="entry name" value="Zn_ribbon_GRF"/>
    <property type="match status" value="2"/>
</dbReference>
<dbReference type="Pfam" id="PF01396">
    <property type="entry name" value="Zn_ribbon_Top1"/>
    <property type="match status" value="1"/>
</dbReference>
<dbReference type="PRINTS" id="PR00417">
    <property type="entry name" value="PRTPISMRASEI"/>
</dbReference>
<dbReference type="SMART" id="SM00437">
    <property type="entry name" value="TOP1Ac"/>
    <property type="match status" value="1"/>
</dbReference>
<dbReference type="SMART" id="SM00436">
    <property type="entry name" value="TOP1Bc"/>
    <property type="match status" value="1"/>
</dbReference>
<dbReference type="SMART" id="SM00493">
    <property type="entry name" value="TOPRIM"/>
    <property type="match status" value="1"/>
</dbReference>
<dbReference type="SUPFAM" id="SSF56712">
    <property type="entry name" value="Prokaryotic type I DNA topoisomerase"/>
    <property type="match status" value="1"/>
</dbReference>
<dbReference type="PROSITE" id="PS00396">
    <property type="entry name" value="TOPO_IA_1"/>
    <property type="match status" value="1"/>
</dbReference>
<dbReference type="PROSITE" id="PS52039">
    <property type="entry name" value="TOPO_IA_2"/>
    <property type="match status" value="1"/>
</dbReference>
<dbReference type="PROSITE" id="PS50880">
    <property type="entry name" value="TOPRIM"/>
    <property type="match status" value="1"/>
</dbReference>
<dbReference type="PROSITE" id="PS51999">
    <property type="entry name" value="ZF_GRF"/>
    <property type="match status" value="2"/>
</dbReference>
<organism>
    <name type="scientific">Drosophila melanogaster</name>
    <name type="common">Fruit fly</name>
    <dbReference type="NCBI Taxonomy" id="7227"/>
    <lineage>
        <taxon>Eukaryota</taxon>
        <taxon>Metazoa</taxon>
        <taxon>Ecdysozoa</taxon>
        <taxon>Arthropoda</taxon>
        <taxon>Hexapoda</taxon>
        <taxon>Insecta</taxon>
        <taxon>Pterygota</taxon>
        <taxon>Neoptera</taxon>
        <taxon>Endopterygota</taxon>
        <taxon>Diptera</taxon>
        <taxon>Brachycera</taxon>
        <taxon>Muscomorpha</taxon>
        <taxon>Ephydroidea</taxon>
        <taxon>Drosophilidae</taxon>
        <taxon>Drosophila</taxon>
        <taxon>Sophophora</taxon>
    </lineage>
</organism>
<evidence type="ECO:0000250" key="1"/>
<evidence type="ECO:0000255" key="2">
    <source>
        <dbReference type="PROSITE-ProRule" id="PRU00995"/>
    </source>
</evidence>
<evidence type="ECO:0000255" key="3">
    <source>
        <dbReference type="PROSITE-ProRule" id="PRU01343"/>
    </source>
</evidence>
<evidence type="ECO:0000255" key="4">
    <source>
        <dbReference type="PROSITE-ProRule" id="PRU01383"/>
    </source>
</evidence>
<evidence type="ECO:0000255" key="5">
    <source>
        <dbReference type="PROSITE-ProRule" id="PRU10131"/>
    </source>
</evidence>
<evidence type="ECO:0000256" key="6">
    <source>
        <dbReference type="SAM" id="MobiDB-lite"/>
    </source>
</evidence>
<evidence type="ECO:0000305" key="7"/>
<keyword id="KW-0238">DNA-binding</keyword>
<keyword id="KW-0413">Isomerase</keyword>
<keyword id="KW-0479">Metal-binding</keyword>
<keyword id="KW-1185">Reference proteome</keyword>
<keyword id="KW-0677">Repeat</keyword>
<keyword id="KW-0799">Topoisomerase</keyword>
<keyword id="KW-0862">Zinc</keyword>
<keyword id="KW-0863">Zinc-finger</keyword>
<proteinExistence type="evidence at transcript level"/>
<accession>Q9NG98</accession>
<accession>Q6AWG6</accession>
<accession>Q9VIV1</accession>
<feature type="chain" id="PRO_0000145195" description="DNA topoisomerase 3-alpha">
    <location>
        <begin position="1"/>
        <end position="1250"/>
    </location>
</feature>
<feature type="domain" description="Toprim" evidence="2">
    <location>
        <begin position="27"/>
        <end position="171"/>
    </location>
</feature>
<feature type="domain" description="Topo IA-type catalytic" evidence="4">
    <location>
        <begin position="189"/>
        <end position="610"/>
    </location>
</feature>
<feature type="zinc finger region" description="GRF-type 1" evidence="3">
    <location>
        <begin position="1035"/>
        <end position="1076"/>
    </location>
</feature>
<feature type="zinc finger region" description="GRF-type 2" evidence="3">
    <location>
        <begin position="1152"/>
        <end position="1193"/>
    </location>
</feature>
<feature type="region of interest" description="Disordered" evidence="6">
    <location>
        <begin position="769"/>
        <end position="899"/>
    </location>
</feature>
<feature type="region of interest" description="Disordered" evidence="6">
    <location>
        <begin position="953"/>
        <end position="1035"/>
    </location>
</feature>
<feature type="region of interest" description="Disordered" evidence="6">
    <location>
        <begin position="1069"/>
        <end position="1150"/>
    </location>
</feature>
<feature type="region of interest" description="Disordered" evidence="6">
    <location>
        <begin position="1188"/>
        <end position="1231"/>
    </location>
</feature>
<feature type="compositionally biased region" description="Gly residues" evidence="6">
    <location>
        <begin position="769"/>
        <end position="835"/>
    </location>
</feature>
<feature type="compositionally biased region" description="Basic and acidic residues" evidence="6">
    <location>
        <begin position="840"/>
        <end position="865"/>
    </location>
</feature>
<feature type="compositionally biased region" description="Low complexity" evidence="6">
    <location>
        <begin position="866"/>
        <end position="886"/>
    </location>
</feature>
<feature type="compositionally biased region" description="Polar residues" evidence="6">
    <location>
        <begin position="956"/>
        <end position="965"/>
    </location>
</feature>
<feature type="compositionally biased region" description="Basic and acidic residues" evidence="6">
    <location>
        <begin position="966"/>
        <end position="994"/>
    </location>
</feature>
<feature type="compositionally biased region" description="Basic and acidic residues" evidence="6">
    <location>
        <begin position="1012"/>
        <end position="1021"/>
    </location>
</feature>
<feature type="compositionally biased region" description="Low complexity" evidence="6">
    <location>
        <begin position="1022"/>
        <end position="1033"/>
    </location>
</feature>
<feature type="compositionally biased region" description="Polar residues" evidence="6">
    <location>
        <begin position="1079"/>
        <end position="1101"/>
    </location>
</feature>
<feature type="compositionally biased region" description="Low complexity" evidence="6">
    <location>
        <begin position="1106"/>
        <end position="1134"/>
    </location>
</feature>
<feature type="compositionally biased region" description="Polar residues" evidence="6">
    <location>
        <begin position="1195"/>
        <end position="1220"/>
    </location>
</feature>
<feature type="active site" description="O-(5'-phospho-DNA)-tyrosine intermediate" evidence="4">
    <location>
        <position position="356"/>
    </location>
</feature>
<feature type="binding site" evidence="3">
    <location>
        <position position="1035"/>
    </location>
    <ligand>
        <name>Zn(2+)</name>
        <dbReference type="ChEBI" id="CHEBI:29105"/>
        <label>1</label>
    </ligand>
</feature>
<feature type="binding site" evidence="3">
    <location>
        <position position="1038"/>
    </location>
    <ligand>
        <name>Zn(2+)</name>
        <dbReference type="ChEBI" id="CHEBI:29105"/>
        <label>1</label>
    </ligand>
</feature>
<feature type="binding site" evidence="3">
    <location>
        <position position="1061"/>
    </location>
    <ligand>
        <name>Zn(2+)</name>
        <dbReference type="ChEBI" id="CHEBI:29105"/>
        <label>1</label>
    </ligand>
</feature>
<feature type="binding site" evidence="3">
    <location>
        <position position="1067"/>
    </location>
    <ligand>
        <name>Zn(2+)</name>
        <dbReference type="ChEBI" id="CHEBI:29105"/>
        <label>1</label>
    </ligand>
</feature>
<feature type="binding site" evidence="3">
    <location>
        <position position="1152"/>
    </location>
    <ligand>
        <name>Zn(2+)</name>
        <dbReference type="ChEBI" id="CHEBI:29105"/>
        <label>2</label>
    </ligand>
</feature>
<feature type="binding site" evidence="3">
    <location>
        <position position="1154"/>
    </location>
    <ligand>
        <name>Zn(2+)</name>
        <dbReference type="ChEBI" id="CHEBI:29105"/>
        <label>2</label>
    </ligand>
</feature>
<feature type="binding site" evidence="3">
    <location>
        <position position="1177"/>
    </location>
    <ligand>
        <name>Zn(2+)</name>
        <dbReference type="ChEBI" id="CHEBI:29105"/>
        <label>2</label>
    </ligand>
</feature>
<feature type="binding site" evidence="3">
    <location>
        <position position="1184"/>
    </location>
    <ligand>
        <name>Zn(2+)</name>
        <dbReference type="ChEBI" id="CHEBI:29105"/>
        <label>2</label>
    </ligand>
</feature>
<feature type="sequence conflict" description="In Ref. 1; AAF71288." evidence="7" ref="1">
    <original>K</original>
    <variation>E</variation>
    <location>
        <position position="111"/>
    </location>
</feature>
<name>TOP3A_DROME</name>
<gene>
    <name type="primary">Top3alpha</name>
    <name type="ORF">CG10123</name>
</gene>